<feature type="chain" id="PRO_1000046558" description="Oxygen-dependent choline dehydrogenase">
    <location>
        <begin position="1"/>
        <end position="549"/>
    </location>
</feature>
<feature type="active site" description="Proton acceptor" evidence="1">
    <location>
        <position position="465"/>
    </location>
</feature>
<feature type="binding site" evidence="1">
    <location>
        <begin position="4"/>
        <end position="33"/>
    </location>
    <ligand>
        <name>FAD</name>
        <dbReference type="ChEBI" id="CHEBI:57692"/>
    </ligand>
</feature>
<protein>
    <recommendedName>
        <fullName evidence="1">Oxygen-dependent choline dehydrogenase</fullName>
        <shortName evidence="1">CDH</shortName>
        <shortName evidence="1">CHD</shortName>
        <ecNumber evidence="1">1.1.99.1</ecNumber>
    </recommendedName>
    <alternativeName>
        <fullName evidence="1">Betaine aldehyde dehydrogenase</fullName>
        <shortName evidence="1">BADH</shortName>
        <ecNumber evidence="1">1.2.1.8</ecNumber>
    </alternativeName>
</protein>
<comment type="function">
    <text evidence="1">Involved in the biosynthesis of the osmoprotectant glycine betaine. Catalyzes the oxidation of choline to betaine aldehyde and betaine aldehyde to glycine betaine at the same rate.</text>
</comment>
<comment type="catalytic activity">
    <reaction evidence="1">
        <text>choline + A = betaine aldehyde + AH2</text>
        <dbReference type="Rhea" id="RHEA:17433"/>
        <dbReference type="ChEBI" id="CHEBI:13193"/>
        <dbReference type="ChEBI" id="CHEBI:15354"/>
        <dbReference type="ChEBI" id="CHEBI:15710"/>
        <dbReference type="ChEBI" id="CHEBI:17499"/>
        <dbReference type="EC" id="1.1.99.1"/>
    </reaction>
</comment>
<comment type="catalytic activity">
    <reaction evidence="1">
        <text>betaine aldehyde + NAD(+) + H2O = glycine betaine + NADH + 2 H(+)</text>
        <dbReference type="Rhea" id="RHEA:15305"/>
        <dbReference type="ChEBI" id="CHEBI:15377"/>
        <dbReference type="ChEBI" id="CHEBI:15378"/>
        <dbReference type="ChEBI" id="CHEBI:15710"/>
        <dbReference type="ChEBI" id="CHEBI:17750"/>
        <dbReference type="ChEBI" id="CHEBI:57540"/>
        <dbReference type="ChEBI" id="CHEBI:57945"/>
        <dbReference type="EC" id="1.2.1.8"/>
    </reaction>
</comment>
<comment type="cofactor">
    <cofactor evidence="1">
        <name>FAD</name>
        <dbReference type="ChEBI" id="CHEBI:57692"/>
    </cofactor>
</comment>
<comment type="pathway">
    <text evidence="1">Amine and polyamine biosynthesis; betaine biosynthesis via choline pathway; betaine aldehyde from choline (cytochrome c reductase route): step 1/1.</text>
</comment>
<comment type="similarity">
    <text evidence="1">Belongs to the GMC oxidoreductase family.</text>
</comment>
<gene>
    <name evidence="1" type="primary">betA</name>
    <name type="ordered locus">BOV_0554</name>
</gene>
<keyword id="KW-0274">FAD</keyword>
<keyword id="KW-0285">Flavoprotein</keyword>
<keyword id="KW-0520">NAD</keyword>
<keyword id="KW-0560">Oxidoreductase</keyword>
<accession>A5VPA6</accession>
<name>BETA_BRUO2</name>
<evidence type="ECO:0000255" key="1">
    <source>
        <dbReference type="HAMAP-Rule" id="MF_00750"/>
    </source>
</evidence>
<proteinExistence type="inferred from homology"/>
<organism>
    <name type="scientific">Brucella ovis (strain ATCC 25840 / 63/290 / NCTC 10512)</name>
    <dbReference type="NCBI Taxonomy" id="444178"/>
    <lineage>
        <taxon>Bacteria</taxon>
        <taxon>Pseudomonadati</taxon>
        <taxon>Pseudomonadota</taxon>
        <taxon>Alphaproteobacteria</taxon>
        <taxon>Hyphomicrobiales</taxon>
        <taxon>Brucellaceae</taxon>
        <taxon>Brucella/Ochrobactrum group</taxon>
        <taxon>Brucella</taxon>
    </lineage>
</organism>
<reference key="1">
    <citation type="journal article" date="2009" name="PLoS ONE">
        <title>Genome degradation in Brucella ovis corresponds with narrowing of its host range and tissue tropism.</title>
        <authorList>
            <person name="Tsolis R.M."/>
            <person name="Seshadri R."/>
            <person name="Santos R.L."/>
            <person name="Sangari F.J."/>
            <person name="Lobo J.M."/>
            <person name="de Jong M.F."/>
            <person name="Ren Q."/>
            <person name="Myers G."/>
            <person name="Brinkac L.M."/>
            <person name="Nelson W.C."/>
            <person name="Deboy R.T."/>
            <person name="Angiuoli S."/>
            <person name="Khouri H."/>
            <person name="Dimitrov G."/>
            <person name="Robinson J.R."/>
            <person name="Mulligan S."/>
            <person name="Walker R.L."/>
            <person name="Elzer P.E."/>
            <person name="Hassan K.A."/>
            <person name="Paulsen I.T."/>
        </authorList>
    </citation>
    <scope>NUCLEOTIDE SEQUENCE [LARGE SCALE GENOMIC DNA]</scope>
    <source>
        <strain>ATCC 25840 / 63/290 / NCTC 10512</strain>
    </source>
</reference>
<dbReference type="EC" id="1.1.99.1" evidence="1"/>
<dbReference type="EC" id="1.2.1.8" evidence="1"/>
<dbReference type="EMBL" id="CP000708">
    <property type="protein sequence ID" value="ABQ61350.1"/>
    <property type="molecule type" value="Genomic_DNA"/>
</dbReference>
<dbReference type="RefSeq" id="WP_004689534.1">
    <property type="nucleotide sequence ID" value="NC_009505.1"/>
</dbReference>
<dbReference type="SMR" id="A5VPA6"/>
<dbReference type="CAZy" id="AA3">
    <property type="family name" value="Auxiliary Activities 3"/>
</dbReference>
<dbReference type="GeneID" id="45124016"/>
<dbReference type="KEGG" id="bov:BOV_0554"/>
<dbReference type="HOGENOM" id="CLU_002865_7_1_5"/>
<dbReference type="PhylomeDB" id="A5VPA6"/>
<dbReference type="UniPathway" id="UPA00529">
    <property type="reaction ID" value="UER00385"/>
</dbReference>
<dbReference type="Proteomes" id="UP000006383">
    <property type="component" value="Chromosome I"/>
</dbReference>
<dbReference type="GO" id="GO:0008802">
    <property type="term" value="F:betaine-aldehyde dehydrogenase (NAD+) activity"/>
    <property type="evidence" value="ECO:0007669"/>
    <property type="project" value="UniProtKB-EC"/>
</dbReference>
<dbReference type="GO" id="GO:0008812">
    <property type="term" value="F:choline dehydrogenase activity"/>
    <property type="evidence" value="ECO:0007669"/>
    <property type="project" value="UniProtKB-UniRule"/>
</dbReference>
<dbReference type="GO" id="GO:0050660">
    <property type="term" value="F:flavin adenine dinucleotide binding"/>
    <property type="evidence" value="ECO:0007669"/>
    <property type="project" value="InterPro"/>
</dbReference>
<dbReference type="GO" id="GO:0019285">
    <property type="term" value="P:glycine betaine biosynthetic process from choline"/>
    <property type="evidence" value="ECO:0007669"/>
    <property type="project" value="UniProtKB-UniRule"/>
</dbReference>
<dbReference type="Gene3D" id="3.50.50.60">
    <property type="entry name" value="FAD/NAD(P)-binding domain"/>
    <property type="match status" value="1"/>
</dbReference>
<dbReference type="Gene3D" id="3.30.560.10">
    <property type="entry name" value="Glucose Oxidase, domain 3"/>
    <property type="match status" value="1"/>
</dbReference>
<dbReference type="HAMAP" id="MF_00750">
    <property type="entry name" value="Choline_dehydrogen"/>
    <property type="match status" value="1"/>
</dbReference>
<dbReference type="InterPro" id="IPR011533">
    <property type="entry name" value="BetA"/>
</dbReference>
<dbReference type="InterPro" id="IPR036188">
    <property type="entry name" value="FAD/NAD-bd_sf"/>
</dbReference>
<dbReference type="InterPro" id="IPR012132">
    <property type="entry name" value="GMC_OxRdtase"/>
</dbReference>
<dbReference type="InterPro" id="IPR000172">
    <property type="entry name" value="GMC_OxRdtase_N"/>
</dbReference>
<dbReference type="InterPro" id="IPR007867">
    <property type="entry name" value="GMC_OxRtase_C"/>
</dbReference>
<dbReference type="NCBIfam" id="TIGR01810">
    <property type="entry name" value="betA"/>
    <property type="match status" value="1"/>
</dbReference>
<dbReference type="NCBIfam" id="NF002550">
    <property type="entry name" value="PRK02106.1"/>
    <property type="match status" value="1"/>
</dbReference>
<dbReference type="PANTHER" id="PTHR11552:SF147">
    <property type="entry name" value="CHOLINE DEHYDROGENASE, MITOCHONDRIAL"/>
    <property type="match status" value="1"/>
</dbReference>
<dbReference type="PANTHER" id="PTHR11552">
    <property type="entry name" value="GLUCOSE-METHANOL-CHOLINE GMC OXIDOREDUCTASE"/>
    <property type="match status" value="1"/>
</dbReference>
<dbReference type="Pfam" id="PF05199">
    <property type="entry name" value="GMC_oxred_C"/>
    <property type="match status" value="1"/>
</dbReference>
<dbReference type="Pfam" id="PF00732">
    <property type="entry name" value="GMC_oxred_N"/>
    <property type="match status" value="1"/>
</dbReference>
<dbReference type="PIRSF" id="PIRSF000137">
    <property type="entry name" value="Alcohol_oxidase"/>
    <property type="match status" value="1"/>
</dbReference>
<dbReference type="SUPFAM" id="SSF54373">
    <property type="entry name" value="FAD-linked reductases, C-terminal domain"/>
    <property type="match status" value="1"/>
</dbReference>
<dbReference type="SUPFAM" id="SSF51905">
    <property type="entry name" value="FAD/NAD(P)-binding domain"/>
    <property type="match status" value="1"/>
</dbReference>
<dbReference type="PROSITE" id="PS00623">
    <property type="entry name" value="GMC_OXRED_1"/>
    <property type="match status" value="1"/>
</dbReference>
<dbReference type="PROSITE" id="PS00624">
    <property type="entry name" value="GMC_OXRED_2"/>
    <property type="match status" value="1"/>
</dbReference>
<sequence length="549" mass="60623">MEADFVIIGSGSAGSAMAYRLSEDGRYSVIVIEYGVPDVGPLIQMPAALSFPMNMETYDWGFSSEPEPHIGGRSLVTPRGKVLGGSSSINGMVYVRGHACDFDHWSQSGARGWAYADVLPYFKRMENSQGGQEGWRGTNGPLYVQRGKRDNPLFHAFVEAGHQAGFEVTDDYNGEKQEGFGPMEQTIHNGRRWSAANAYLKPALKRPNVKLVKGFARKIVLEGKRAVGVEIEAGRTFSTIRARREVIIAASSINSPKLLMLSGIGPAAHLKEHGIDLVADRPGVGQNLQDHLEVYIQQECTQPITLYSKLNLFSKARIGVEWLLFKTGDGATNHFESAAFVRSKAGVEYPDIQYHFLPVAIRYDGKAAAQSHGFQAHVGPMRSKSRGSVTLRSANPREKPVIKFNYMSHEDDWADFRHCVRLTREIFGQAAFDPYRGAEIQPGAHVQTDDEIDNFIREHVESAFHPCGTCKMGAVDDPMAVVDPECRVIGVEGLRVADSSIFPRITNGNLNGPSIMVGEKASDHILGRTPLARSNQEPWINPRWQVSDR</sequence>